<dbReference type="EMBL" id="J00270">
    <property type="protein sequence ID" value="AAA60345.1"/>
    <property type="molecule type" value="mRNA"/>
</dbReference>
<dbReference type="EMBL" id="X05153">
    <property type="protein sequence ID" value="CAA28799.1"/>
    <property type="molecule type" value="Genomic_DNA"/>
</dbReference>
<dbReference type="EMBL" id="X05153">
    <property type="protein sequence ID" value="CAA28800.1"/>
    <property type="molecule type" value="Genomic_DNA"/>
</dbReference>
<dbReference type="EMBL" id="AB049976">
    <property type="protein sequence ID" value="BAC06860.1"/>
    <property type="molecule type" value="Genomic_DNA"/>
</dbReference>
<dbReference type="EMBL" id="CR541987">
    <property type="protein sequence ID" value="CAG46784.1"/>
    <property type="molecule type" value="mRNA"/>
</dbReference>
<dbReference type="EMBL" id="CR542017">
    <property type="protein sequence ID" value="CAG46814.1"/>
    <property type="molecule type" value="mRNA"/>
</dbReference>
<dbReference type="EMBL" id="CH471111">
    <property type="protein sequence ID" value="EAW57990.1"/>
    <property type="molecule type" value="Genomic_DNA"/>
</dbReference>
<dbReference type="EMBL" id="BC069103">
    <property type="protein sequence ID" value="AAH69103.1"/>
    <property type="molecule type" value="mRNA"/>
</dbReference>
<dbReference type="EMBL" id="BC112316">
    <property type="protein sequence ID" value="AAI12317.1"/>
    <property type="molecule type" value="mRNA"/>
</dbReference>
<dbReference type="EMBL" id="BC112318">
    <property type="protein sequence ID" value="AAI12319.1"/>
    <property type="molecule type" value="mRNA"/>
</dbReference>
<dbReference type="CCDS" id="CCDS8765.1"/>
<dbReference type="PIR" id="A27880">
    <property type="entry name" value="LAHU"/>
</dbReference>
<dbReference type="RefSeq" id="NP_001371279.1">
    <property type="nucleotide sequence ID" value="NM_001384350.1"/>
</dbReference>
<dbReference type="RefSeq" id="NP_002280.1">
    <property type="nucleotide sequence ID" value="NM_002289.3"/>
</dbReference>
<dbReference type="PDB" id="1A4V">
    <property type="method" value="X-ray"/>
    <property type="resolution" value="1.80 A"/>
    <property type="chains" value="A=20-142"/>
</dbReference>
<dbReference type="PDB" id="1B9O">
    <property type="method" value="X-ray"/>
    <property type="resolution" value="1.15 A"/>
    <property type="chains" value="A=20-142"/>
</dbReference>
<dbReference type="PDB" id="1CB3">
    <property type="method" value="NMR"/>
    <property type="chains" value="A=120-130"/>
</dbReference>
<dbReference type="PDB" id="1HML">
    <property type="method" value="X-ray"/>
    <property type="resolution" value="1.70 A"/>
    <property type="chains" value="A=1-142"/>
</dbReference>
<dbReference type="PDB" id="3B0I">
    <property type="method" value="X-ray"/>
    <property type="resolution" value="1.80 A"/>
    <property type="chains" value="A=20-142"/>
</dbReference>
<dbReference type="PDB" id="3B0O">
    <property type="method" value="X-ray"/>
    <property type="resolution" value="1.61 A"/>
    <property type="chains" value="A/B=21-142"/>
</dbReference>
<dbReference type="PDB" id="4L41">
    <property type="method" value="X-ray"/>
    <property type="resolution" value="2.70 A"/>
    <property type="chains" value="A/B=19-142"/>
</dbReference>
<dbReference type="PDBsum" id="1A4V"/>
<dbReference type="PDBsum" id="1B9O"/>
<dbReference type="PDBsum" id="1CB3"/>
<dbReference type="PDBsum" id="1HML"/>
<dbReference type="PDBsum" id="3B0I"/>
<dbReference type="PDBsum" id="3B0O"/>
<dbReference type="PDBsum" id="4L41"/>
<dbReference type="BMRB" id="P00709"/>
<dbReference type="PCDDB" id="P00709"/>
<dbReference type="SMR" id="P00709"/>
<dbReference type="BioGRID" id="110101">
    <property type="interactions" value="8"/>
</dbReference>
<dbReference type="ComplexPortal" id="CPX-2811">
    <property type="entry name" value="Lactose synthase complex"/>
</dbReference>
<dbReference type="FunCoup" id="P00709">
    <property type="interactions" value="43"/>
</dbReference>
<dbReference type="IntAct" id="P00709">
    <property type="interactions" value="1"/>
</dbReference>
<dbReference type="STRING" id="9606.ENSP00000301046"/>
<dbReference type="DrugBank" id="DB03796">
    <property type="generic name" value="Palmitic Acid"/>
</dbReference>
<dbReference type="Allergome" id="1289">
    <property type="allergen name" value="Hom s ALA"/>
</dbReference>
<dbReference type="GlyCosmos" id="P00709">
    <property type="glycosylation" value="2 sites, No reported glycans"/>
</dbReference>
<dbReference type="GlyGen" id="P00709">
    <property type="glycosylation" value="2 sites"/>
</dbReference>
<dbReference type="iPTMnet" id="P00709"/>
<dbReference type="PhosphoSitePlus" id="P00709"/>
<dbReference type="BioMuta" id="LALBA"/>
<dbReference type="DMDM" id="126001"/>
<dbReference type="MassIVE" id="P00709"/>
<dbReference type="PaxDb" id="9606-ENSP00000301046"/>
<dbReference type="PeptideAtlas" id="P00709"/>
<dbReference type="ProteomicsDB" id="51268"/>
<dbReference type="Antibodypedia" id="13654">
    <property type="antibodies" value="384 antibodies from 31 providers"/>
</dbReference>
<dbReference type="DNASU" id="3906"/>
<dbReference type="Ensembl" id="ENST00000301046.6">
    <property type="protein sequence ID" value="ENSP00000301046.2"/>
    <property type="gene ID" value="ENSG00000167531.6"/>
</dbReference>
<dbReference type="GeneID" id="3906"/>
<dbReference type="KEGG" id="hsa:3906"/>
<dbReference type="MANE-Select" id="ENST00000301046.6">
    <property type="protein sequence ID" value="ENSP00000301046.2"/>
    <property type="RefSeq nucleotide sequence ID" value="NM_002289.3"/>
    <property type="RefSeq protein sequence ID" value="NP_002280.1"/>
</dbReference>
<dbReference type="UCSC" id="uc001rrt.3">
    <property type="organism name" value="human"/>
</dbReference>
<dbReference type="AGR" id="HGNC:6480"/>
<dbReference type="CTD" id="3906"/>
<dbReference type="DisGeNET" id="3906"/>
<dbReference type="GeneCards" id="LALBA"/>
<dbReference type="HGNC" id="HGNC:6480">
    <property type="gene designation" value="LALBA"/>
</dbReference>
<dbReference type="HPA" id="ENSG00000167531">
    <property type="expression patterns" value="Tissue enriched (breast)"/>
</dbReference>
<dbReference type="MIM" id="149750">
    <property type="type" value="gene"/>
</dbReference>
<dbReference type="neXtProt" id="NX_P00709"/>
<dbReference type="OpenTargets" id="ENSG00000167531"/>
<dbReference type="PharmGKB" id="PA30269"/>
<dbReference type="VEuPathDB" id="HostDB:ENSG00000167531"/>
<dbReference type="eggNOG" id="ENOG502T8BJ">
    <property type="taxonomic scope" value="Eukaryota"/>
</dbReference>
<dbReference type="GeneTree" id="ENSGT00940000161726"/>
<dbReference type="InParanoid" id="P00709"/>
<dbReference type="OMA" id="PEWICTI"/>
<dbReference type="OrthoDB" id="17373at2759"/>
<dbReference type="PAN-GO" id="P00709">
    <property type="GO annotations" value="1 GO annotation based on evolutionary models"/>
</dbReference>
<dbReference type="PhylomeDB" id="P00709"/>
<dbReference type="TreeFam" id="TF324882"/>
<dbReference type="BioCyc" id="MetaCyc:HS09571-MONOMER"/>
<dbReference type="PathwayCommons" id="P00709"/>
<dbReference type="Reactome" id="R-HSA-5653890">
    <property type="pathway name" value="Lactose synthesis"/>
</dbReference>
<dbReference type="SignaLink" id="P00709"/>
<dbReference type="BioGRID-ORCS" id="3906">
    <property type="hits" value="9 hits in 1139 CRISPR screens"/>
</dbReference>
<dbReference type="EvolutionaryTrace" id="P00709"/>
<dbReference type="GeneWiki" id="Alpha-lactalbumin"/>
<dbReference type="GenomeRNAi" id="3906"/>
<dbReference type="Pharos" id="P00709">
    <property type="development level" value="Tbio"/>
</dbReference>
<dbReference type="PRO" id="PR:P00709"/>
<dbReference type="Proteomes" id="UP000005640">
    <property type="component" value="Chromosome 12"/>
</dbReference>
<dbReference type="RNAct" id="P00709">
    <property type="molecule type" value="protein"/>
</dbReference>
<dbReference type="Bgee" id="ENSG00000167531">
    <property type="expression patterns" value="Expressed in male germ line stem cell (sensu Vertebrata) in testis and 78 other cell types or tissues"/>
</dbReference>
<dbReference type="ExpressionAtlas" id="P00709">
    <property type="expression patterns" value="baseline and differential"/>
</dbReference>
<dbReference type="GO" id="GO:0005615">
    <property type="term" value="C:extracellular space"/>
    <property type="evidence" value="ECO:0000304"/>
    <property type="project" value="ProtInc"/>
</dbReference>
<dbReference type="GO" id="GO:0005796">
    <property type="term" value="C:Golgi lumen"/>
    <property type="evidence" value="ECO:0000304"/>
    <property type="project" value="Reactome"/>
</dbReference>
<dbReference type="GO" id="GO:0000139">
    <property type="term" value="C:Golgi membrane"/>
    <property type="evidence" value="ECO:0000304"/>
    <property type="project" value="Reactome"/>
</dbReference>
<dbReference type="GO" id="GO:0032991">
    <property type="term" value="C:protein-containing complex"/>
    <property type="evidence" value="ECO:0007669"/>
    <property type="project" value="Ensembl"/>
</dbReference>
<dbReference type="GO" id="GO:0005509">
    <property type="term" value="F:calcium ion binding"/>
    <property type="evidence" value="ECO:0007669"/>
    <property type="project" value="InterPro"/>
</dbReference>
<dbReference type="GO" id="GO:0004461">
    <property type="term" value="F:lactose synthase activity"/>
    <property type="evidence" value="ECO:0007669"/>
    <property type="project" value="Ensembl"/>
</dbReference>
<dbReference type="GO" id="GO:0003796">
    <property type="term" value="F:lysozyme activity"/>
    <property type="evidence" value="ECO:0000318"/>
    <property type="project" value="GO_Central"/>
</dbReference>
<dbReference type="GO" id="GO:0006915">
    <property type="term" value="P:apoptotic process"/>
    <property type="evidence" value="ECO:0000304"/>
    <property type="project" value="ProtInc"/>
</dbReference>
<dbReference type="GO" id="GO:0007267">
    <property type="term" value="P:cell-cell signaling"/>
    <property type="evidence" value="ECO:0000304"/>
    <property type="project" value="ProtInc"/>
</dbReference>
<dbReference type="GO" id="GO:0042742">
    <property type="term" value="P:defense response to bacterium"/>
    <property type="evidence" value="ECO:0000304"/>
    <property type="project" value="ProtInc"/>
</dbReference>
<dbReference type="GO" id="GO:0050829">
    <property type="term" value="P:defense response to Gram-negative bacterium"/>
    <property type="evidence" value="ECO:0000318"/>
    <property type="project" value="GO_Central"/>
</dbReference>
<dbReference type="GO" id="GO:0050830">
    <property type="term" value="P:defense response to Gram-positive bacterium"/>
    <property type="evidence" value="ECO:0000318"/>
    <property type="project" value="GO_Central"/>
</dbReference>
<dbReference type="GO" id="GO:0005989">
    <property type="term" value="P:lactose biosynthetic process"/>
    <property type="evidence" value="ECO:0000304"/>
    <property type="project" value="ProtInc"/>
</dbReference>
<dbReference type="GO" id="GO:0007165">
    <property type="term" value="P:signal transduction"/>
    <property type="evidence" value="ECO:0000304"/>
    <property type="project" value="ProtInc"/>
</dbReference>
<dbReference type="CDD" id="cd16898">
    <property type="entry name" value="LYZ_LA"/>
    <property type="match status" value="1"/>
</dbReference>
<dbReference type="FunFam" id="1.10.530.10:FF:000014">
    <property type="entry name" value="Alpha-lactalbumin"/>
    <property type="match status" value="1"/>
</dbReference>
<dbReference type="Gene3D" id="1.10.530.10">
    <property type="match status" value="1"/>
</dbReference>
<dbReference type="InterPro" id="IPR001916">
    <property type="entry name" value="Glyco_hydro_22"/>
</dbReference>
<dbReference type="InterPro" id="IPR019799">
    <property type="entry name" value="Glyco_hydro_22_CS"/>
</dbReference>
<dbReference type="InterPro" id="IPR000545">
    <property type="entry name" value="Lactalbumin"/>
</dbReference>
<dbReference type="InterPro" id="IPR023346">
    <property type="entry name" value="Lysozyme-like_dom_sf"/>
</dbReference>
<dbReference type="PANTHER" id="PTHR11407:SF32">
    <property type="entry name" value="ALPHA-LACTALBUMIN"/>
    <property type="match status" value="1"/>
</dbReference>
<dbReference type="PANTHER" id="PTHR11407">
    <property type="entry name" value="LYSOZYME C"/>
    <property type="match status" value="1"/>
</dbReference>
<dbReference type="Pfam" id="PF00062">
    <property type="entry name" value="Lys"/>
    <property type="match status" value="1"/>
</dbReference>
<dbReference type="PRINTS" id="PR00136">
    <property type="entry name" value="LACTALBUMIN"/>
</dbReference>
<dbReference type="PRINTS" id="PR00135">
    <property type="entry name" value="LYZLACT"/>
</dbReference>
<dbReference type="SMART" id="SM00263">
    <property type="entry name" value="LYZ1"/>
    <property type="match status" value="1"/>
</dbReference>
<dbReference type="SUPFAM" id="SSF53955">
    <property type="entry name" value="Lysozyme-like"/>
    <property type="match status" value="1"/>
</dbReference>
<dbReference type="PROSITE" id="PS00128">
    <property type="entry name" value="GLYCOSYL_HYDROL_F22_1"/>
    <property type="match status" value="1"/>
</dbReference>
<dbReference type="PROSITE" id="PS51348">
    <property type="entry name" value="GLYCOSYL_HYDROL_F22_2"/>
    <property type="match status" value="1"/>
</dbReference>
<accession>P00709</accession>
<accession>Q6FGX0</accession>
<accession>Q9UDK4</accession>
<reference key="1">
    <citation type="journal article" date="1982" name="Nucleic Acids Res.">
        <title>Comparison of the nucleotide sequence of cloned human and guinea-pig pre-alpha-lactalbumin cDNA with that of chick pre-lysozyme cDNA suggests evolution from a common ancestral gene.</title>
        <authorList>
            <person name="Hall L."/>
            <person name="Craig R.K."/>
            <person name="Edbrooke M.R."/>
            <person name="Campbell P.N."/>
        </authorList>
    </citation>
    <scope>NUCLEOTIDE SEQUENCE [MRNA]</scope>
</reference>
<reference key="2">
    <citation type="journal article" date="1987" name="Biochem. J.">
        <title>Organization and sequence of the human alpha-lactalbumin gene.</title>
        <authorList>
            <person name="Hall L."/>
            <person name="Emery D.C."/>
            <person name="Davies M.S."/>
            <person name="Parker D."/>
            <person name="Craig R.K."/>
        </authorList>
    </citation>
    <scope>NUCLEOTIDE SEQUENCE [GENOMIC DNA]</scope>
</reference>
<reference key="3">
    <citation type="submission" date="2000-10" db="EMBL/GenBank/DDBJ databases">
        <title>Analysis of flanking sequence of human alpha-lactalbumin containing a putative locus control region.</title>
        <authorList>
            <person name="Fujiwara Y."/>
            <person name="Takahashi R."/>
            <person name="Hirabayashi M."/>
            <person name="Ueda M."/>
            <person name="Muramatsu T."/>
            <person name="Yamanaka H."/>
            <person name="Sekikawa K."/>
        </authorList>
    </citation>
    <scope>NUCLEOTIDE SEQUENCE [GENOMIC DNA]</scope>
</reference>
<reference key="4">
    <citation type="submission" date="2004-06" db="EMBL/GenBank/DDBJ databases">
        <title>Cloning of human full open reading frames in Gateway(TM) system entry vector (pDONR201).</title>
        <authorList>
            <person name="Halleck A."/>
            <person name="Ebert L."/>
            <person name="Mkoundinya M."/>
            <person name="Schick M."/>
            <person name="Eisenstein S."/>
            <person name="Neubert P."/>
            <person name="Kstrang K."/>
            <person name="Schatten R."/>
            <person name="Shen B."/>
            <person name="Henze S."/>
            <person name="Mar W."/>
            <person name="Korn B."/>
            <person name="Zuo D."/>
            <person name="Hu Y."/>
            <person name="LaBaer J."/>
        </authorList>
    </citation>
    <scope>NUCLEOTIDE SEQUENCE [LARGE SCALE MRNA]</scope>
</reference>
<reference key="5">
    <citation type="submission" date="2005-07" db="EMBL/GenBank/DDBJ databases">
        <authorList>
            <person name="Mural R.J."/>
            <person name="Istrail S."/>
            <person name="Sutton G.G."/>
            <person name="Florea L."/>
            <person name="Halpern A.L."/>
            <person name="Mobarry C.M."/>
            <person name="Lippert R."/>
            <person name="Walenz B."/>
            <person name="Shatkay H."/>
            <person name="Dew I."/>
            <person name="Miller J.R."/>
            <person name="Flanigan M.J."/>
            <person name="Edwards N.J."/>
            <person name="Bolanos R."/>
            <person name="Fasulo D."/>
            <person name="Halldorsson B.V."/>
            <person name="Hannenhalli S."/>
            <person name="Turner R."/>
            <person name="Yooseph S."/>
            <person name="Lu F."/>
            <person name="Nusskern D.R."/>
            <person name="Shue B.C."/>
            <person name="Zheng X.H."/>
            <person name="Zhong F."/>
            <person name="Delcher A.L."/>
            <person name="Huson D.H."/>
            <person name="Kravitz S.A."/>
            <person name="Mouchard L."/>
            <person name="Reinert K."/>
            <person name="Remington K.A."/>
            <person name="Clark A.G."/>
            <person name="Waterman M.S."/>
            <person name="Eichler E.E."/>
            <person name="Adams M.D."/>
            <person name="Hunkapiller M.W."/>
            <person name="Myers E.W."/>
            <person name="Venter J.C."/>
        </authorList>
    </citation>
    <scope>NUCLEOTIDE SEQUENCE [LARGE SCALE GENOMIC DNA]</scope>
</reference>
<reference key="6">
    <citation type="journal article" date="2004" name="Genome Res.">
        <title>The status, quality, and expansion of the NIH full-length cDNA project: the Mammalian Gene Collection (MGC).</title>
        <authorList>
            <consortium name="The MGC Project Team"/>
        </authorList>
    </citation>
    <scope>NUCLEOTIDE SEQUENCE [LARGE SCALE MRNA]</scope>
    <source>
        <tissue>Brain</tissue>
    </source>
</reference>
<reference key="7">
    <citation type="journal article" date="1972" name="Eur. J. Biochem.">
        <title>The complete amino-acid sequence of human alpha-lactalbumin.</title>
        <authorList>
            <person name="Findlay J.B.C."/>
            <person name="Brew K."/>
        </authorList>
    </citation>
    <scope>PROTEIN SEQUENCE OF 20-142</scope>
</reference>
<reference key="8">
    <citation type="journal article" date="1992" name="J. Dairy Res.">
        <title>Identification of a new molecular form of human alpha-lactalbumin.</title>
        <authorList>
            <person name="Maynard F."/>
        </authorList>
    </citation>
    <scope>PROTEIN SEQUENCE OF 78-81 AND 90-112</scope>
    <source>
        <tissue>Milk</tissue>
    </source>
</reference>
<reference key="9">
    <citation type="journal article" date="1995" name="Protein Sci. 4 Suppl.">
        <title>An unusual glycosylation site in alpha-lactalbumin from human milk.</title>
        <authorList>
            <person name="Cavaletto M."/>
            <person name="Giuffrida M.G."/>
            <person name="Giunta C."/>
            <person name="Conti A."/>
        </authorList>
    </citation>
    <scope>GLYCOSYLATION AT ASN-90</scope>
</reference>
<reference key="10">
    <citation type="journal article" date="2008" name="Proteomics">
        <title>Identification of N-linked glycoproteins in human milk by hydrophilic interaction liquid chromatography and mass spectrometry.</title>
        <authorList>
            <person name="Picariello G."/>
            <person name="Ferranti P."/>
            <person name="Mamone G."/>
            <person name="Roepstorff P."/>
            <person name="Addeo F."/>
        </authorList>
    </citation>
    <scope>GLYCOSYLATION [LARGE SCALE ANALYSIS] AT ASN-64</scope>
    <source>
        <tissue>Milk</tissue>
    </source>
</reference>
<reference key="11">
    <citation type="journal article" date="1991" name="J. Mol. Biol.">
        <title>Crystal structure of human alpha-lactalbumin at 1.7-A resolution.</title>
        <authorList>
            <person name="Acharya K.R."/>
            <person name="Ren J.S."/>
            <person name="Stuart D.I."/>
            <person name="Phillips D.C."/>
            <person name="Fenna R.E."/>
        </authorList>
    </citation>
    <scope>X-RAY CRYSTALLOGRAPHY (1.7 ANGSTROMS)</scope>
</reference>
<reference evidence="10" key="12">
    <citation type="journal article" date="1993" name="J. Biol. Chem.">
        <title>Alpha-lactalbumin possesses a distinct zinc binding site.</title>
        <authorList>
            <person name="Ren J.S."/>
            <person name="Stuart D.I."/>
            <person name="Acharya K.R."/>
        </authorList>
    </citation>
    <scope>X-RAY CRYSTALLOGRAPHY (1.7 ANGSTROMS) IN COMPLEX WITH CALCIUM AND ZINC</scope>
</reference>
<reference evidence="9" key="13">
    <citation type="journal article" date="1998" name="Biochemistry">
        <title>Structural evidence for the presence of a secondary calcium binding site in human alpha-lactalbumin.</title>
        <authorList>
            <person name="Chandra N."/>
            <person name="Brew K."/>
            <person name="Acharya K.R."/>
        </authorList>
    </citation>
    <scope>X-RAY CRYSTALLOGRAPHY (1.8 ANGSTROMS) OF 20-142 IN COMPLEX WITH CALCIUM</scope>
</reference>
<reference key="14">
    <citation type="journal article" date="1999" name="J. Mol. Biol.">
        <title>Crystallographic evaluation of internal motion of human alpha-lactalbumin refined by full-matrix least-squares method.</title>
        <authorList>
            <person name="Harata K."/>
            <person name="Abe Y."/>
            <person name="Muraki M."/>
        </authorList>
    </citation>
    <scope>X-RAY CRYSTALLOGRAPHY (1.15 ANGSTROMS)</scope>
</reference>
<reference key="15">
    <citation type="journal article" date="2005" name="J. Nutr. Biochem.">
        <title>Detection of a single nucleotide polymorphism in the human alpha-lactalbumin gene: implications for human milk proteins.</title>
        <authorList>
            <person name="Chowanadisai W."/>
            <person name="Kelleher S.L."/>
            <person name="Nemeth J.F."/>
            <person name="Yachetti S."/>
            <person name="Kuhlman C.F."/>
            <person name="Jackson J.G."/>
            <person name="Davis A.M."/>
            <person name="Lien E.L."/>
            <person name="Loennerdal B."/>
        </authorList>
    </citation>
    <scope>VARIANT VAL-46</scope>
    <scope>IDENTIFICATION BY MASS SPECTROMETRY</scope>
</reference>
<name>LALBA_HUMAN</name>
<organism>
    <name type="scientific">Homo sapiens</name>
    <name type="common">Human</name>
    <dbReference type="NCBI Taxonomy" id="9606"/>
    <lineage>
        <taxon>Eukaryota</taxon>
        <taxon>Metazoa</taxon>
        <taxon>Chordata</taxon>
        <taxon>Craniata</taxon>
        <taxon>Vertebrata</taxon>
        <taxon>Euteleostomi</taxon>
        <taxon>Mammalia</taxon>
        <taxon>Eutheria</taxon>
        <taxon>Euarchontoglires</taxon>
        <taxon>Primates</taxon>
        <taxon>Haplorrhini</taxon>
        <taxon>Catarrhini</taxon>
        <taxon>Hominidae</taxon>
        <taxon>Homo</taxon>
    </lineage>
</organism>
<evidence type="ECO:0000255" key="1">
    <source>
        <dbReference type="PROSITE-ProRule" id="PRU00680"/>
    </source>
</evidence>
<evidence type="ECO:0000269" key="2">
    <source>
    </source>
</evidence>
<evidence type="ECO:0000269" key="3">
    <source>
    </source>
</evidence>
<evidence type="ECO:0000269" key="4">
    <source>
    </source>
</evidence>
<evidence type="ECO:0000269" key="5">
    <source>
    </source>
</evidence>
<evidence type="ECO:0000269" key="6">
    <source>
    </source>
</evidence>
<evidence type="ECO:0000269" key="7">
    <source ref="9"/>
</evidence>
<evidence type="ECO:0000305" key="8"/>
<evidence type="ECO:0007744" key="9">
    <source>
        <dbReference type="PDB" id="1A4V"/>
    </source>
</evidence>
<evidence type="ECO:0007744" key="10">
    <source>
        <dbReference type="PDB" id="1HML"/>
    </source>
</evidence>
<evidence type="ECO:0007829" key="11">
    <source>
        <dbReference type="PDB" id="1B9O"/>
    </source>
</evidence>
<evidence type="ECO:0007829" key="12">
    <source>
        <dbReference type="PDB" id="3B0O"/>
    </source>
</evidence>
<evidence type="ECO:0007829" key="13">
    <source>
        <dbReference type="PDB" id="4L41"/>
    </source>
</evidence>
<sequence>MRFFVPLFLVGILFPAILAKQFTKCELSQLLKDIDGYGGIALPELICTMFHTSGYDTQAIVENNESTEYGLFQISNKLWCKSSQVPQSRNICDISCDKFLDDDITDDIMCAKKILDIKGIDYWLAHKALCTEKLEQWLCEKL</sequence>
<keyword id="KW-0002">3D-structure</keyword>
<keyword id="KW-0106">Calcium</keyword>
<keyword id="KW-0903">Direct protein sequencing</keyword>
<keyword id="KW-1015">Disulfide bond</keyword>
<keyword id="KW-0325">Glycoprotein</keyword>
<keyword id="KW-0422">Lactose biosynthesis</keyword>
<keyword id="KW-0479">Metal-binding</keyword>
<keyword id="KW-0494">Milk protein</keyword>
<keyword id="KW-1267">Proteomics identification</keyword>
<keyword id="KW-1185">Reference proteome</keyword>
<keyword id="KW-0964">Secreted</keyword>
<keyword id="KW-0732">Signal</keyword>
<keyword id="KW-0862">Zinc</keyword>
<protein>
    <recommendedName>
        <fullName>Alpha-lactalbumin</fullName>
    </recommendedName>
    <alternativeName>
        <fullName>Lactose synthase B protein</fullName>
    </alternativeName>
    <alternativeName>
        <fullName>Lysozyme-like protein 7</fullName>
    </alternativeName>
</protein>
<comment type="function">
    <text>Regulatory subunit of lactose synthase, changes the substrate specificity of galactosyltransferase in the mammary gland making glucose a good acceptor substrate for this enzyme. This enables LS to synthesize lactose, the major carbohydrate component of milk. In other tissues, galactosyltransferase transfers galactose onto the N-acetylglucosamine of the oligosaccharide chains in glycoproteins.</text>
</comment>
<comment type="subunit">
    <text>Lactose synthase (LS) is a heterodimer of a catalytic component, beta1,4-galactosyltransferase (beta4Gal-T1) and a regulatory component, alpha-lactalbumin (LA).</text>
</comment>
<comment type="subcellular location">
    <subcellularLocation>
        <location>Secreted</location>
    </subcellularLocation>
</comment>
<comment type="tissue specificity">
    <text>Mammary gland specific. Secreted in milk.</text>
</comment>
<comment type="similarity">
    <text evidence="1">Belongs to the glycosyl hydrolase 22 family.</text>
</comment>
<gene>
    <name type="primary">LALBA</name>
    <name type="synonym">LYZL7</name>
</gene>
<proteinExistence type="evidence at protein level"/>
<feature type="signal peptide" evidence="4">
    <location>
        <begin position="1"/>
        <end position="19"/>
    </location>
</feature>
<feature type="chain" id="PRO_0000018444" description="Alpha-lactalbumin">
    <location>
        <begin position="20"/>
        <end position="142"/>
    </location>
</feature>
<feature type="domain" description="C-type lysozyme" evidence="1">
    <location>
        <begin position="20"/>
        <end position="142"/>
    </location>
</feature>
<feature type="binding site" evidence="6 9">
    <location>
        <position position="57"/>
    </location>
    <ligand>
        <name>Ca(2+)</name>
        <dbReference type="ChEBI" id="CHEBI:29108"/>
        <label>1</label>
    </ligand>
</feature>
<feature type="binding site" evidence="6 9">
    <location>
        <position position="58"/>
    </location>
    <ligand>
        <name>Ca(2+)</name>
        <dbReference type="ChEBI" id="CHEBI:29108"/>
        <label>1</label>
    </ligand>
</feature>
<feature type="binding site" evidence="5 10">
    <location>
        <position position="68"/>
    </location>
    <ligand>
        <name>Zn(2+)</name>
        <dbReference type="ChEBI" id="CHEBI:29105"/>
    </ligand>
</feature>
<feature type="binding site" evidence="5 6 9 10">
    <location>
        <position position="98"/>
    </location>
    <ligand>
        <name>Ca(2+)</name>
        <dbReference type="ChEBI" id="CHEBI:29108"/>
        <label>2</label>
    </ligand>
</feature>
<feature type="binding site" evidence="6 9">
    <location>
        <position position="100"/>
    </location>
    <ligand>
        <name>Ca(2+)</name>
        <dbReference type="ChEBI" id="CHEBI:29108"/>
        <label>1</label>
    </ligand>
</feature>
<feature type="binding site" evidence="5 6 9 10">
    <location>
        <position position="101"/>
    </location>
    <ligand>
        <name>Ca(2+)</name>
        <dbReference type="ChEBI" id="CHEBI:29108"/>
        <label>2</label>
    </ligand>
</feature>
<feature type="binding site" evidence="6 9">
    <location>
        <position position="102"/>
    </location>
    <ligand>
        <name>Ca(2+)</name>
        <dbReference type="ChEBI" id="CHEBI:29108"/>
        <label>1</label>
    </ligand>
</feature>
<feature type="binding site" evidence="5 6 9 10">
    <location>
        <position position="103"/>
    </location>
    <ligand>
        <name>Ca(2+)</name>
        <dbReference type="ChEBI" id="CHEBI:29108"/>
        <label>2</label>
    </ligand>
</feature>
<feature type="binding site" evidence="5 6 9 10">
    <location>
        <position position="106"/>
    </location>
    <ligand>
        <name>Ca(2+)</name>
        <dbReference type="ChEBI" id="CHEBI:29108"/>
        <label>2</label>
    </ligand>
</feature>
<feature type="binding site" evidence="5 6 9 10">
    <location>
        <position position="107"/>
    </location>
    <ligand>
        <name>Ca(2+)</name>
        <dbReference type="ChEBI" id="CHEBI:29108"/>
        <label>2</label>
    </ligand>
</feature>
<feature type="binding site" evidence="5 10">
    <location>
        <position position="135"/>
    </location>
    <ligand>
        <name>Zn(2+)</name>
        <dbReference type="ChEBI" id="CHEBI:29105"/>
    </ligand>
</feature>
<feature type="glycosylation site" description="N-linked (GlcNAc...) asparagine" evidence="3">
    <location>
        <position position="64"/>
    </location>
</feature>
<feature type="glycosylation site" description="N-linked (GlcNAc...) asparagine; atypical; partial" evidence="7">
    <location>
        <position position="90"/>
    </location>
</feature>
<feature type="disulfide bond">
    <location>
        <begin position="25"/>
        <end position="139"/>
    </location>
</feature>
<feature type="disulfide bond">
    <location>
        <begin position="47"/>
        <end position="130"/>
    </location>
</feature>
<feature type="disulfide bond">
    <location>
        <begin position="80"/>
        <end position="96"/>
    </location>
</feature>
<feature type="disulfide bond">
    <location>
        <begin position="92"/>
        <end position="110"/>
    </location>
</feature>
<feature type="sequence variant" id="VAR_024526" description="In dbSNP:rs2232565." evidence="2">
    <original>I</original>
    <variation>V</variation>
    <location>
        <position position="46"/>
    </location>
</feature>
<feature type="sequence conflict" description="In Ref. 8; AA sequence." evidence="8" ref="8">
    <original>F</original>
    <variation>K</variation>
    <location>
        <position position="99"/>
    </location>
</feature>
<feature type="helix" evidence="11">
    <location>
        <begin position="24"/>
        <end position="30"/>
    </location>
</feature>
<feature type="helix" evidence="11">
    <location>
        <begin position="32"/>
        <end position="34"/>
    </location>
</feature>
<feature type="helix" evidence="11">
    <location>
        <begin position="37"/>
        <end position="39"/>
    </location>
</feature>
<feature type="helix" evidence="11">
    <location>
        <begin position="42"/>
        <end position="53"/>
    </location>
</feature>
<feature type="strand" evidence="11">
    <location>
        <begin position="60"/>
        <end position="62"/>
    </location>
</feature>
<feature type="strand" evidence="11">
    <location>
        <begin position="67"/>
        <end position="69"/>
    </location>
</feature>
<feature type="turn" evidence="11">
    <location>
        <begin position="70"/>
        <end position="73"/>
    </location>
</feature>
<feature type="turn" evidence="11">
    <location>
        <begin position="76"/>
        <end position="78"/>
    </location>
</feature>
<feature type="strand" evidence="11">
    <location>
        <begin position="79"/>
        <end position="81"/>
    </location>
</feature>
<feature type="strand" evidence="13">
    <location>
        <begin position="83"/>
        <end position="85"/>
    </location>
</feature>
<feature type="strand" evidence="13">
    <location>
        <begin position="91"/>
        <end position="95"/>
    </location>
</feature>
<feature type="helix" evidence="11">
    <location>
        <begin position="96"/>
        <end position="100"/>
    </location>
</feature>
<feature type="helix" evidence="11">
    <location>
        <begin position="105"/>
        <end position="117"/>
    </location>
</feature>
<feature type="turn" evidence="11">
    <location>
        <begin position="118"/>
        <end position="120"/>
    </location>
</feature>
<feature type="helix" evidence="11">
    <location>
        <begin position="121"/>
        <end position="124"/>
    </location>
</feature>
<feature type="helix" evidence="12">
    <location>
        <begin position="128"/>
        <end position="130"/>
    </location>
</feature>
<feature type="helix" evidence="11">
    <location>
        <begin position="134"/>
        <end position="137"/>
    </location>
</feature>